<protein>
    <recommendedName>
        <fullName>F420-non-reducing hydrogenase iron-sulfur subunit A</fullName>
        <ecNumber>1.12.99.-</ecNumber>
    </recommendedName>
</protein>
<comment type="function">
    <text evidence="2">Part of a complex that provides reducing equivalents for heterodisulfide reductase.</text>
</comment>
<comment type="cofactor">
    <cofactor evidence="2">
        <name>Ni(2+)</name>
        <dbReference type="ChEBI" id="CHEBI:49786"/>
    </cofactor>
</comment>
<comment type="subunit">
    <text evidence="2">The F420-non-reducing hydrogenase is composed of three subunits; MvhA, MvhD and MvhG. It forms a complex with the heterodisulfide reductase (Hdr).</text>
</comment>
<comment type="subcellular location">
    <subcellularLocation>
        <location evidence="2">Cytoplasm</location>
    </subcellularLocation>
</comment>
<comment type="similarity">
    <text evidence="3">Belongs to the [NiFe]/[NiFeSe] hydrogenase large subunit family.</text>
</comment>
<comment type="sequence caution" evidence="3">
    <conflict type="erroneous initiation">
        <sequence resource="EMBL-CDS" id="ADB58596"/>
    </conflict>
    <text>Extended N-terminus.</text>
</comment>
<keyword id="KW-0963">Cytoplasm</keyword>
<keyword id="KW-0903">Direct protein sequencing</keyword>
<keyword id="KW-0479">Metal-binding</keyword>
<keyword id="KW-0533">Nickel</keyword>
<keyword id="KW-0560">Oxidoreductase</keyword>
<keyword id="KW-1185">Reference proteome</keyword>
<proteinExistence type="evidence at protein level"/>
<accession>P84625</accession>
<accession>D2REQ2</accession>
<gene>
    <name type="primary">mvhA</name>
    <name type="ordered locus">Arcpr_1550</name>
</gene>
<reference key="1">
    <citation type="journal article" date="2010" name="Stand. Genomic Sci.">
        <title>Complete genome sequence of Archaeoglobus profundus type strain (AV18).</title>
        <authorList>
            <person name="von Jan M."/>
            <person name="Lapidus A."/>
            <person name="Del Rio T.G."/>
            <person name="Copeland A."/>
            <person name="Tice H."/>
            <person name="Cheng J.F."/>
            <person name="Lucas S."/>
            <person name="Chen F."/>
            <person name="Nolan M."/>
            <person name="Goodwin L."/>
            <person name="Han C."/>
            <person name="Pitluck S."/>
            <person name="Liolios K."/>
            <person name="Ivanova N."/>
            <person name="Mavromatis K."/>
            <person name="Ovchinnikova G."/>
            <person name="Chertkov O."/>
            <person name="Pati A."/>
            <person name="Chen A."/>
            <person name="Palaniappan K."/>
            <person name="Land M."/>
            <person name="Hauser L."/>
            <person name="Chang Y.J."/>
            <person name="Jeffries C.D."/>
            <person name="Saunders E."/>
            <person name="Brettin T."/>
            <person name="Detter J.C."/>
            <person name="Chain P."/>
            <person name="Eichinger K."/>
            <person name="Huber H."/>
            <person name="Spring S."/>
            <person name="Rohde M."/>
            <person name="Goker M."/>
            <person name="Wirth R."/>
            <person name="Woyke T."/>
            <person name="Bristow J."/>
            <person name="Eisen J.A."/>
            <person name="Markowitz V."/>
            <person name="Hugenholtz P."/>
            <person name="Kyrpides N.C."/>
            <person name="Klenk H.P."/>
        </authorList>
    </citation>
    <scope>NUCLEOTIDE SEQUENCE [LARGE SCALE GENOMIC DNA]</scope>
    <source>
        <strain>DSM 5631 / JCM 9629 / NBRC 100127 / Av18</strain>
    </source>
</reference>
<reference evidence="3" key="2">
    <citation type="journal article" date="2004" name="Eur. J. Biochem.">
        <title>Two distinct heterodisulfide reductase-like enzymes in the sulfate-reducing archaeon Archaeoglobus profundus.</title>
        <authorList>
            <person name="Mander G.J."/>
            <person name="Pierik A.J."/>
            <person name="Huber H."/>
            <person name="Hedderich R."/>
        </authorList>
    </citation>
    <scope>PROTEIN SEQUENCE OF 1-20</scope>
    <scope>COFACTOR</scope>
    <scope>INTERACTION WITH HETERODISULFIDE REDUCTASE</scope>
    <scope>SUBCELLULAR LOCATION</scope>
</reference>
<evidence type="ECO:0000255" key="1"/>
<evidence type="ECO:0000269" key="2">
    <source>
    </source>
</evidence>
<evidence type="ECO:0000305" key="3"/>
<organism>
    <name type="scientific">Archaeoglobus profundus (strain DSM 5631 / JCM 9629 / NBRC 100127 / Av18)</name>
    <dbReference type="NCBI Taxonomy" id="572546"/>
    <lineage>
        <taxon>Archaea</taxon>
        <taxon>Methanobacteriati</taxon>
        <taxon>Methanobacteriota</taxon>
        <taxon>Archaeoglobi</taxon>
        <taxon>Archaeoglobales</taxon>
        <taxon>Archaeoglobaceae</taxon>
        <taxon>Archaeoglobus</taxon>
    </lineage>
</organism>
<dbReference type="EC" id="1.12.99.-"/>
<dbReference type="EMBL" id="CP001857">
    <property type="protein sequence ID" value="ADB58596.1"/>
    <property type="status" value="ALT_INIT"/>
    <property type="molecule type" value="Genomic_DNA"/>
</dbReference>
<dbReference type="RefSeq" id="WP_048084930.1">
    <property type="nucleotide sequence ID" value="NC_013741.1"/>
</dbReference>
<dbReference type="SMR" id="P84625"/>
<dbReference type="STRING" id="572546.Arcpr_1550"/>
<dbReference type="PaxDb" id="572546-Arcpr_1550"/>
<dbReference type="GeneID" id="8740240"/>
<dbReference type="KEGG" id="apo:Arcpr_1550"/>
<dbReference type="eggNOG" id="arCOG01549">
    <property type="taxonomic scope" value="Archaea"/>
</dbReference>
<dbReference type="HOGENOM" id="CLU_044556_0_0_2"/>
<dbReference type="OrthoDB" id="42371at2157"/>
<dbReference type="Proteomes" id="UP000001901">
    <property type="component" value="Chromosome"/>
</dbReference>
<dbReference type="GO" id="GO:0005737">
    <property type="term" value="C:cytoplasm"/>
    <property type="evidence" value="ECO:0007669"/>
    <property type="project" value="UniProtKB-SubCell"/>
</dbReference>
<dbReference type="GO" id="GO:0016151">
    <property type="term" value="F:nickel cation binding"/>
    <property type="evidence" value="ECO:0007669"/>
    <property type="project" value="InterPro"/>
</dbReference>
<dbReference type="GO" id="GO:0016491">
    <property type="term" value="F:oxidoreductase activity"/>
    <property type="evidence" value="ECO:0007669"/>
    <property type="project" value="UniProtKB-KW"/>
</dbReference>
<dbReference type="Gene3D" id="1.10.645.10">
    <property type="entry name" value="Cytochrome-c3 Hydrogenase, chain B"/>
    <property type="match status" value="1"/>
</dbReference>
<dbReference type="InterPro" id="IPR001501">
    <property type="entry name" value="Ni-dep_hyd_lsu"/>
</dbReference>
<dbReference type="InterPro" id="IPR029014">
    <property type="entry name" value="NiFe-Hase_large"/>
</dbReference>
<dbReference type="PANTHER" id="PTHR43600">
    <property type="entry name" value="COENZYME F420 HYDROGENASE, SUBUNIT ALPHA"/>
    <property type="match status" value="1"/>
</dbReference>
<dbReference type="PANTHER" id="PTHR43600:SF2">
    <property type="entry name" value="F420-NON-REDUCING HYDROGENASE VHU SUBUNIT A"/>
    <property type="match status" value="1"/>
</dbReference>
<dbReference type="Pfam" id="PF00374">
    <property type="entry name" value="NiFeSe_Hases"/>
    <property type="match status" value="2"/>
</dbReference>
<dbReference type="SUPFAM" id="SSF56762">
    <property type="entry name" value="HydB/Nqo4-like"/>
    <property type="match status" value="1"/>
</dbReference>
<feature type="chain" id="PRO_0000199728" description="F420-non-reducing hydrogenase iron-sulfur subunit A">
    <location>
        <begin position="1"/>
        <end position="486"/>
    </location>
</feature>
<feature type="binding site" evidence="1">
    <location>
        <position position="61"/>
    </location>
    <ligand>
        <name>Ni(2+)</name>
        <dbReference type="ChEBI" id="CHEBI:49786"/>
    </ligand>
</feature>
<feature type="binding site" evidence="1">
    <location>
        <position position="64"/>
    </location>
    <ligand>
        <name>Ni(2+)</name>
        <dbReference type="ChEBI" id="CHEBI:49786"/>
    </ligand>
</feature>
<name>VHCA_ARCPA</name>
<sequence>MKKIEIEPMTRLEGHGKIAIFLDDKGNVADAFYQIVEFRGYETFLRGLPIEEVPRTVSTICGVCRAVHHTASTKASDGVYGVEPTETAKKIRELYLNAHYVEDHCAILYALGLPDFVVGIEADPAERNLVGLIKKVGVDVGKTVLKKRFAAVKVLEMLGGKPIHPVAGLPGGWSKRITEDERKEIEALAKEMVELGELTLQVFEDVILKNEKLLELITADYYRVVVNYLGTVDDAGKVNYYDGWQVGIDTKGNEVFRFKGKDYLNYIAERVVPWSYVKMPYFKQLGWKGFVDGEGTSLYSVGPLARCNIGDMNTPKAKEAQEKMFDVLKERPIHYIMAYHWARAVELLNAAERVLELAQDPEITSPDVRAELGEVTGEGVGIIEAPRGTLIHHYKTDENGIVTDANLIVATTHNHAPINIAIKKAAQHFIQENKEINDKLLNYVEIAYRPYDICQACASHALPGRYPLEVLVYDSEGELIKTIRNF</sequence>